<evidence type="ECO:0000255" key="1">
    <source>
        <dbReference type="HAMAP-Rule" id="MF_00543"/>
    </source>
</evidence>
<organism>
    <name type="scientific">Nostoc punctiforme (strain ATCC 29133 / PCC 73102)</name>
    <dbReference type="NCBI Taxonomy" id="63737"/>
    <lineage>
        <taxon>Bacteria</taxon>
        <taxon>Bacillati</taxon>
        <taxon>Cyanobacteriota</taxon>
        <taxon>Cyanophyceae</taxon>
        <taxon>Nostocales</taxon>
        <taxon>Nostocaceae</taxon>
        <taxon>Nostoc</taxon>
    </lineage>
</organism>
<keyword id="KW-0456">Lyase</keyword>
<keyword id="KW-0663">Pyridoxal phosphate</keyword>
<keyword id="KW-1185">Reference proteome</keyword>
<gene>
    <name evidence="1" type="primary">tpl</name>
    <name type="ordered locus">Npun_R5724</name>
</gene>
<accession>B2J908</accession>
<feature type="chain" id="PRO_0000408494" description="Tyrosine phenol-lyase">
    <location>
        <begin position="1"/>
        <end position="467"/>
    </location>
</feature>
<feature type="modified residue" description="N6-(pyridoxal phosphate)lysine" evidence="1">
    <location>
        <position position="268"/>
    </location>
</feature>
<dbReference type="EC" id="4.1.99.2" evidence="1"/>
<dbReference type="EMBL" id="CP001037">
    <property type="protein sequence ID" value="ACC84024.1"/>
    <property type="molecule type" value="Genomic_DNA"/>
</dbReference>
<dbReference type="RefSeq" id="WP_012411967.1">
    <property type="nucleotide sequence ID" value="NC_010628.1"/>
</dbReference>
<dbReference type="SMR" id="B2J908"/>
<dbReference type="STRING" id="63737.Npun_R5724"/>
<dbReference type="EnsemblBacteria" id="ACC84024">
    <property type="protein sequence ID" value="ACC84024"/>
    <property type="gene ID" value="Npun_R5724"/>
</dbReference>
<dbReference type="KEGG" id="npu:Npun_R5724"/>
<dbReference type="eggNOG" id="COG3033">
    <property type="taxonomic scope" value="Bacteria"/>
</dbReference>
<dbReference type="HOGENOM" id="CLU_047223_0_0_3"/>
<dbReference type="OrthoDB" id="9764079at2"/>
<dbReference type="Proteomes" id="UP000001191">
    <property type="component" value="Chromosome"/>
</dbReference>
<dbReference type="GO" id="GO:0050371">
    <property type="term" value="F:tyrosine phenol-lyase activity"/>
    <property type="evidence" value="ECO:0007669"/>
    <property type="project" value="UniProtKB-UniRule"/>
</dbReference>
<dbReference type="GO" id="GO:0006570">
    <property type="term" value="P:tyrosine metabolic process"/>
    <property type="evidence" value="ECO:0007669"/>
    <property type="project" value="InterPro"/>
</dbReference>
<dbReference type="CDD" id="cd00617">
    <property type="entry name" value="Tnase_like"/>
    <property type="match status" value="1"/>
</dbReference>
<dbReference type="Gene3D" id="3.90.1150.10">
    <property type="entry name" value="Aspartate Aminotransferase, domain 1"/>
    <property type="match status" value="1"/>
</dbReference>
<dbReference type="Gene3D" id="3.40.640.10">
    <property type="entry name" value="Type I PLP-dependent aspartate aminotransferase-like (Major domain)"/>
    <property type="match status" value="1"/>
</dbReference>
<dbReference type="HAMAP" id="MF_00543">
    <property type="entry name" value="Tyr_phenol_lyase"/>
    <property type="match status" value="1"/>
</dbReference>
<dbReference type="InterPro" id="IPR001597">
    <property type="entry name" value="ArAA_b-elim_lyase/Thr_aldolase"/>
</dbReference>
<dbReference type="InterPro" id="IPR011166">
    <property type="entry name" value="Beta-eliminating_lyase"/>
</dbReference>
<dbReference type="InterPro" id="IPR015424">
    <property type="entry name" value="PyrdxlP-dep_Trfase"/>
</dbReference>
<dbReference type="InterPro" id="IPR015421">
    <property type="entry name" value="PyrdxlP-dep_Trfase_major"/>
</dbReference>
<dbReference type="InterPro" id="IPR015422">
    <property type="entry name" value="PyrdxlP-dep_Trfase_small"/>
</dbReference>
<dbReference type="InterPro" id="IPR018176">
    <property type="entry name" value="Tryptophanase_CS"/>
</dbReference>
<dbReference type="InterPro" id="IPR013441">
    <property type="entry name" value="Tyr_phenol_ly"/>
</dbReference>
<dbReference type="NCBIfam" id="NF009709">
    <property type="entry name" value="PRK13238.1"/>
    <property type="match status" value="1"/>
</dbReference>
<dbReference type="NCBIfam" id="TIGR02618">
    <property type="entry name" value="tyr_phenol_ly"/>
    <property type="match status" value="1"/>
</dbReference>
<dbReference type="PANTHER" id="PTHR32325">
    <property type="entry name" value="BETA-ELIMINATING LYASE-LIKE PROTEIN-RELATED"/>
    <property type="match status" value="1"/>
</dbReference>
<dbReference type="PANTHER" id="PTHR32325:SF4">
    <property type="entry name" value="TRYPTOPHANASE"/>
    <property type="match status" value="1"/>
</dbReference>
<dbReference type="Pfam" id="PF01212">
    <property type="entry name" value="Beta_elim_lyase"/>
    <property type="match status" value="1"/>
</dbReference>
<dbReference type="PIRSF" id="PIRSF001386">
    <property type="entry name" value="Trpase"/>
    <property type="match status" value="1"/>
</dbReference>
<dbReference type="SUPFAM" id="SSF53383">
    <property type="entry name" value="PLP-dependent transferases"/>
    <property type="match status" value="1"/>
</dbReference>
<dbReference type="PROSITE" id="PS00853">
    <property type="entry name" value="BETA_ELIM_LYASE"/>
    <property type="match status" value="1"/>
</dbReference>
<proteinExistence type="inferred from homology"/>
<protein>
    <recommendedName>
        <fullName evidence="1">Tyrosine phenol-lyase</fullName>
        <ecNumber evidence="1">4.1.99.2</ecNumber>
    </recommendedName>
    <alternativeName>
        <fullName evidence="1">Beta-tyrosinase</fullName>
    </alternativeName>
</protein>
<comment type="catalytic activity">
    <reaction evidence="1">
        <text>L-tyrosine + H2O = phenol + pyruvate + NH4(+)</text>
        <dbReference type="Rhea" id="RHEA:21704"/>
        <dbReference type="ChEBI" id="CHEBI:15361"/>
        <dbReference type="ChEBI" id="CHEBI:15377"/>
        <dbReference type="ChEBI" id="CHEBI:15882"/>
        <dbReference type="ChEBI" id="CHEBI:28938"/>
        <dbReference type="ChEBI" id="CHEBI:58315"/>
        <dbReference type="EC" id="4.1.99.2"/>
    </reaction>
</comment>
<comment type="cofactor">
    <cofactor evidence="1">
        <name>pyridoxal 5'-phosphate</name>
        <dbReference type="ChEBI" id="CHEBI:597326"/>
    </cofactor>
</comment>
<comment type="subunit">
    <text evidence="1">Homotetramer.</text>
</comment>
<comment type="similarity">
    <text evidence="1">Belongs to the beta-eliminating lyase family.</text>
</comment>
<sequence>MTDAKQTSPRRRRSWAEPYKIKVVEPLKITTRAEREQAIAQAGYNTFLLRSEDVYIDLLTDSGTSAMSDYQWAGMMLGDEAYAGSKNFYNLEASIQKYYGYRHIVPTHQGRGAENILSQILIKPGDYIPGNMYFTTTRLHQELAGGTFVDVIIDEAHDAQSLHPFKGNVDLQKLTDLIERVGAERIPYISVAGTVNMAGGQPISMANLRAVHQLAQTYGIRIILDATRAVENAHFIQQREEDYSSQAIATILREFCSYTDGCTMSGKKDALVNIGGWLALNDYNLYEEARNLIVIYEGLHTYGGMAGRDMEAMARGIEESVQDDHIRARVGQVEYLGQKLLDWGIPIVVPIGGHAIYLDAKRFLPQIPQDQFPAQRLAAELYLEAGIRAMERGIVSAGRNKETGDNYYPELELVRLTIPRRVYTQAHMDLTAEAVEEVYHNRDRLRGLKMIYEPKYLRFFQARFELQ</sequence>
<name>TPL_NOSP7</name>
<reference key="1">
    <citation type="journal article" date="2013" name="Plant Physiol.">
        <title>A Nostoc punctiforme Sugar Transporter Necessary to Establish a Cyanobacterium-Plant Symbiosis.</title>
        <authorList>
            <person name="Ekman M."/>
            <person name="Picossi S."/>
            <person name="Campbell E.L."/>
            <person name="Meeks J.C."/>
            <person name="Flores E."/>
        </authorList>
    </citation>
    <scope>NUCLEOTIDE SEQUENCE [LARGE SCALE GENOMIC DNA]</scope>
    <source>
        <strain>ATCC 29133 / PCC 73102</strain>
    </source>
</reference>